<feature type="chain" id="PRO_0000213995" description="Histone-lysine N-methyltransferase CLF">
    <location>
        <begin position="1"/>
        <end position="902"/>
    </location>
</feature>
<feature type="domain" description="SANT" evidence="2">
    <location>
        <begin position="531"/>
        <end position="581"/>
    </location>
</feature>
<feature type="domain" description="CXC" evidence="5">
    <location>
        <begin position="638"/>
        <end position="737"/>
    </location>
</feature>
<feature type="domain" description="SET" evidence="3">
    <location>
        <begin position="752"/>
        <end position="867"/>
    </location>
</feature>
<feature type="region of interest" description="Disordered" evidence="6">
    <location>
        <begin position="1"/>
        <end position="33"/>
    </location>
</feature>
<feature type="region of interest" description="Disordered" evidence="6">
    <location>
        <begin position="73"/>
        <end position="107"/>
    </location>
</feature>
<feature type="region of interest" description="Disordered" evidence="6">
    <location>
        <begin position="335"/>
        <end position="522"/>
    </location>
</feature>
<feature type="region of interest" description="Disordered" evidence="6">
    <location>
        <begin position="875"/>
        <end position="902"/>
    </location>
</feature>
<feature type="compositionally biased region" description="Low complexity" evidence="6">
    <location>
        <begin position="1"/>
        <end position="14"/>
    </location>
</feature>
<feature type="compositionally biased region" description="Basic and acidic residues" evidence="6">
    <location>
        <begin position="15"/>
        <end position="33"/>
    </location>
</feature>
<feature type="compositionally biased region" description="Basic and acidic residues" evidence="6">
    <location>
        <begin position="78"/>
        <end position="95"/>
    </location>
</feature>
<feature type="compositionally biased region" description="Polar residues" evidence="6">
    <location>
        <begin position="337"/>
        <end position="357"/>
    </location>
</feature>
<feature type="compositionally biased region" description="Low complexity" evidence="6">
    <location>
        <begin position="394"/>
        <end position="403"/>
    </location>
</feature>
<feature type="compositionally biased region" description="Basic residues" evidence="6">
    <location>
        <begin position="404"/>
        <end position="416"/>
    </location>
</feature>
<feature type="compositionally biased region" description="Low complexity" evidence="6">
    <location>
        <begin position="438"/>
        <end position="449"/>
    </location>
</feature>
<feature type="compositionally biased region" description="Polar residues" evidence="6">
    <location>
        <begin position="459"/>
        <end position="473"/>
    </location>
</feature>
<feature type="compositionally biased region" description="Basic and acidic residues" evidence="6">
    <location>
        <begin position="875"/>
        <end position="890"/>
    </location>
</feature>
<feature type="binding site" evidence="3">
    <location>
        <position position="866"/>
    </location>
    <ligand>
        <name>S-adenosyl-L-methionine</name>
        <dbReference type="ChEBI" id="CHEBI:59789"/>
    </ligand>
</feature>
<feature type="sequence conflict" description="In Ref. 2; CAA71599." evidence="24" ref="2">
    <original>S</original>
    <variation>N</variation>
    <location>
        <position position="225"/>
    </location>
</feature>
<feature type="sequence conflict" description="In Ref. 2; CAA71599." evidence="24" ref="2">
    <original>T</original>
    <variation>P</variation>
    <location>
        <position position="332"/>
    </location>
</feature>
<feature type="sequence conflict" description="In Ref. 2; CAA71599." evidence="24" ref="2">
    <original>K</original>
    <variation>N</variation>
    <location>
        <position position="415"/>
    </location>
</feature>
<feature type="sequence conflict" description="In Ref. 2; CAA71599." evidence="24" ref="2">
    <original>K</original>
    <variation>Q</variation>
    <location>
        <position position="658"/>
    </location>
</feature>
<feature type="sequence conflict" description="In Ref. 2; CAA71599." evidence="24" ref="2">
    <original>C</original>
    <variation>Y</variation>
    <location>
        <position position="674"/>
    </location>
</feature>
<feature type="sequence conflict" description="In Ref. 2; CAA71599." evidence="24" ref="2">
    <original>V</original>
    <variation>I</variation>
    <location>
        <position position="761"/>
    </location>
</feature>
<keyword id="KW-0938">Abscisic acid signaling pathway</keyword>
<keyword id="KW-0156">Chromatin regulator</keyword>
<keyword id="KW-0217">Developmental protein</keyword>
<keyword id="KW-0221">Differentiation</keyword>
<keyword id="KW-0287">Flowering</keyword>
<keyword id="KW-0489">Methyltransferase</keyword>
<keyword id="KW-0539">Nucleus</keyword>
<keyword id="KW-1185">Reference proteome</keyword>
<keyword id="KW-0678">Repressor</keyword>
<keyword id="KW-0949">S-adenosyl-L-methionine</keyword>
<keyword id="KW-0804">Transcription</keyword>
<keyword id="KW-0805">Transcription regulation</keyword>
<keyword id="KW-0808">Transferase</keyword>
<organism>
    <name type="scientific">Arabidopsis thaliana</name>
    <name type="common">Mouse-ear cress</name>
    <dbReference type="NCBI Taxonomy" id="3702"/>
    <lineage>
        <taxon>Eukaryota</taxon>
        <taxon>Viridiplantae</taxon>
        <taxon>Streptophyta</taxon>
        <taxon>Embryophyta</taxon>
        <taxon>Tracheophyta</taxon>
        <taxon>Spermatophyta</taxon>
        <taxon>Magnoliopsida</taxon>
        <taxon>eudicotyledons</taxon>
        <taxon>Gunneridae</taxon>
        <taxon>Pentapetalae</taxon>
        <taxon>rosids</taxon>
        <taxon>malvids</taxon>
        <taxon>Brassicales</taxon>
        <taxon>Brassicaceae</taxon>
        <taxon>Camelineae</taxon>
        <taxon>Arabidopsis</taxon>
    </lineage>
</organism>
<reference key="1">
    <citation type="journal article" date="1997" name="Nature">
        <title>A Polycomb-group gene regulates homeotic gene expression in Arabidopsis.</title>
        <authorList>
            <person name="Goodrich J."/>
            <person name="Puangsomlee P."/>
            <person name="Martin M."/>
            <person name="Long D."/>
            <person name="Meyerowitz E.M."/>
            <person name="Coupland G."/>
        </authorList>
    </citation>
    <scope>NUCLEOTIDE SEQUENCE [MRNA]</scope>
    <scope>FUNCTION</scope>
    <scope>TISSUE SPECIFICITY</scope>
    <source>
        <strain>cv. Landsberg erecta</strain>
        <tissue>Flower</tissue>
    </source>
</reference>
<reference key="2">
    <citation type="journal article" date="1999" name="Nature">
        <title>Sequence and analysis of chromosome 2 of the plant Arabidopsis thaliana.</title>
        <authorList>
            <person name="Lin X."/>
            <person name="Kaul S."/>
            <person name="Rounsley S.D."/>
            <person name="Shea T.P."/>
            <person name="Benito M.-I."/>
            <person name="Town C.D."/>
            <person name="Fujii C.Y."/>
            <person name="Mason T.M."/>
            <person name="Bowman C.L."/>
            <person name="Barnstead M.E."/>
            <person name="Feldblyum T.V."/>
            <person name="Buell C.R."/>
            <person name="Ketchum K.A."/>
            <person name="Lee J.J."/>
            <person name="Ronning C.M."/>
            <person name="Koo H.L."/>
            <person name="Moffat K.S."/>
            <person name="Cronin L.A."/>
            <person name="Shen M."/>
            <person name="Pai G."/>
            <person name="Van Aken S."/>
            <person name="Umayam L."/>
            <person name="Tallon L.J."/>
            <person name="Gill J.E."/>
            <person name="Adams M.D."/>
            <person name="Carrera A.J."/>
            <person name="Creasy T.H."/>
            <person name="Goodman H.M."/>
            <person name="Somerville C.R."/>
            <person name="Copenhaver G.P."/>
            <person name="Preuss D."/>
            <person name="Nierman W.C."/>
            <person name="White O."/>
            <person name="Eisen J.A."/>
            <person name="Salzberg S.L."/>
            <person name="Fraser C.M."/>
            <person name="Venter J.C."/>
        </authorList>
    </citation>
    <scope>NUCLEOTIDE SEQUENCE [LARGE SCALE GENOMIC DNA]</scope>
    <source>
        <strain>cv. Columbia</strain>
    </source>
</reference>
<reference key="3">
    <citation type="journal article" date="2017" name="Plant J.">
        <title>Araport11: a complete reannotation of the Arabidopsis thaliana reference genome.</title>
        <authorList>
            <person name="Cheng C.Y."/>
            <person name="Krishnakumar V."/>
            <person name="Chan A.P."/>
            <person name="Thibaud-Nissen F."/>
            <person name="Schobel S."/>
            <person name="Town C.D."/>
        </authorList>
    </citation>
    <scope>GENOME REANNOTATION</scope>
    <source>
        <strain>cv. Columbia</strain>
    </source>
</reference>
<reference key="4">
    <citation type="journal article" date="1998" name="Planta">
        <title>The CURLY LEAF gene controls both division and elongation of cells during the expansion of the leaf blade in Arabidopsis thaliana.</title>
        <authorList>
            <person name="Kim G.-T."/>
            <person name="Tsukaya H."/>
            <person name="Uchimiya H."/>
        </authorList>
    </citation>
    <scope>FUNCTION</scope>
</reference>
<reference key="5">
    <citation type="journal article" date="2000" name="Genetics">
        <title>Genetic analysis of incurvata mutants reveals three independent genetic operations at work in Arabidopsis leaf morphogenesis.</title>
        <authorList>
            <person name="Serrano-Cartagena J."/>
            <person name="Candela H."/>
            <person name="Robles P."/>
            <person name="Ponce M.R."/>
            <person name="Perez-Perez J.M."/>
            <person name="Piqueras P."/>
            <person name="Micol J.L."/>
        </authorList>
    </citation>
    <scope>FUNCTION</scope>
</reference>
<reference key="6">
    <citation type="journal article" date="2001" name="Curr. Biol.">
        <title>Polycomb group genes control pattern formation in plant seed.</title>
        <authorList>
            <person name="Soerensen M.B."/>
            <person name="Chaudhury A.M."/>
            <person name="Robert H."/>
            <person name="Bancharel E."/>
            <person name="Berger F."/>
        </authorList>
    </citation>
    <scope>FUNCTION</scope>
</reference>
<reference key="7">
    <citation type="journal article" date="2001" name="Nucleic Acids Res.">
        <title>The Arabidopsis thaliana genome contains at least 29 active genes encoding SET domain proteins that can be assigned to four evolutionarily conserved classes.</title>
        <authorList>
            <person name="Baumbusch L.O."/>
            <person name="Thorstensen T."/>
            <person name="Krauss V."/>
            <person name="Fischer A."/>
            <person name="Naumann K."/>
            <person name="Assalkhou R."/>
            <person name="Schulz I."/>
            <person name="Reuter G."/>
            <person name="Aalen R.B."/>
        </authorList>
    </citation>
    <scope>SUBCELLULAR LOCATION</scope>
</reference>
<reference key="8">
    <citation type="journal article" date="2004" name="Plant J.">
        <title>FIE and CURLY LEAF polycomb proteins interact in the regulation of homeobox gene expression during sporophyte development.</title>
        <authorList>
            <person name="Katz A."/>
            <person name="Oliva M."/>
            <person name="Mosquna A."/>
            <person name="Hakim O."/>
            <person name="Ohad N."/>
        </authorList>
    </citation>
    <scope>INTERACTION WITH FIE</scope>
</reference>
<reference key="9">
    <citation type="journal article" date="2007" name="Nucleic Acids Res.">
        <title>The Arabidopsis homologs of trithorax (ATX1) and enhancer of zeste (CLF) establish 'bivalent chromatin marks' at the silent AGAMOUS locus.</title>
        <authorList>
            <person name="Saleh A."/>
            <person name="Al-Abdallat A."/>
            <person name="Ndamukong I."/>
            <person name="Alvarez-Venegas R."/>
            <person name="Avramova Z."/>
        </authorList>
    </citation>
    <scope>FUNCTION</scope>
    <scope>DISRUPTION PHENOTYPE</scope>
    <scope>INTERACTION WITH ATX1</scope>
    <scope>SUBCELLULAR LOCATION</scope>
    <source>
        <strain>cv. Wassilewskija</strain>
    </source>
</reference>
<reference key="10">
    <citation type="journal article" date="2008" name="Curr. Biol.">
        <title>Polycomb silencing of KNOX genes confines shoot stem cell niches in Arabidopsis.</title>
        <authorList>
            <person name="Xu L."/>
            <person name="Shen W.H."/>
        </authorList>
    </citation>
    <scope>INTERACTION WITH RING1A</scope>
</reference>
<reference key="11">
    <citation type="journal article" date="2010" name="Plant Cell">
        <title>The CURLY LEAF interacting protein BLISTER controls expression of polycomb-group target genes and cellular differentiation of Arabidopsis thaliana.</title>
        <authorList>
            <person name="Schatlowski N."/>
            <person name="Stahl Y."/>
            <person name="Hohenstatt M.L."/>
            <person name="Goodrich J."/>
            <person name="Schubert D."/>
        </authorList>
    </citation>
    <scope>INTERACTION WITH BLI</scope>
</reference>
<reference key="12">
    <citation type="journal article" date="2015" name="PLoS Genet.">
        <title>Kicking against the PRCs - A domesticated transposase antagonises silencing mediated by polycomb group proteins and is an accessory component of polycomb repressive complex 2.</title>
        <authorList>
            <person name="Liang S.C."/>
            <person name="Hartwig B."/>
            <person name="Perera P."/>
            <person name="Mora-Garcia S."/>
            <person name="de Leau E."/>
            <person name="Thornton H."/>
            <person name="de Lima Alves F."/>
            <person name="de Alves F.L."/>
            <person name="Rappsilber J."/>
            <person name="Rapsilber J."/>
            <person name="Yang S."/>
            <person name="James G.V."/>
            <person name="Schneeberger K."/>
            <person name="Finnegan E.J."/>
            <person name="Turck F."/>
            <person name="Goodrich J."/>
        </authorList>
    </citation>
    <scope>INTERACTION WITH ALP1</scope>
</reference>
<reference key="13">
    <citation type="journal article" date="2017" name="Proc. Natl. Acad. Sci. U.S.A.">
        <title>Ctf4-related protein recruits LHP1-PRC2 to maintain H3K27me3 levels in dividing cells in Arabidopsis thaliana.</title>
        <authorList>
            <person name="Zhou Y."/>
            <person name="Tergemina E."/>
            <person name="Cui H."/>
            <person name="Foerderer A."/>
            <person name="Hartwig B."/>
            <person name="Velikkakam James G."/>
            <person name="Schneeberger K."/>
            <person name="Turck F."/>
        </authorList>
    </citation>
    <scope>INTERACTION WITH EOL1</scope>
    <source>
        <strain>cv. Columbia</strain>
    </source>
</reference>
<reference key="14">
    <citation type="journal article" date="2019" name="Plant J.">
        <title>Polycomb repressive complex 2 attenuates ABA-induced senescence in Arabidopsis.</title>
        <authorList>
            <person name="Liu C."/>
            <person name="Cheng J."/>
            <person name="Zhuang Y."/>
            <person name="Ye L."/>
            <person name="Li Z."/>
            <person name="Wang Y."/>
            <person name="Qi M."/>
            <person name="Xu L."/>
            <person name="Zhang Y."/>
        </authorList>
    </citation>
    <scope>FUNCTION</scope>
    <scope>DISRUPTION PHENOTYPE</scope>
</reference>
<reference key="15">
    <citation type="journal article" date="2020" name="Biochem. Soc. Trans.">
        <title>The complexity of PRC2 catalysts CLF and SWN in plants.</title>
        <authorList>
            <person name="Shu J."/>
            <person name="Chen C."/>
            <person name="Li C."/>
            <person name="Cui Y."/>
        </authorList>
    </citation>
    <scope>REVIEW</scope>
</reference>
<reference key="16">
    <citation type="journal article" date="2022" name="J. Integr. Plant Biol.">
        <title>HEXOKINASE1 forms a nuclear complex with the PRC2 subunits CURLY LEAF and SWINGER to regulate glucose signaling.</title>
        <authorList>
            <person name="Liu Y."/>
            <person name="Bai Y."/>
            <person name="Li N."/>
            <person name="Li M."/>
            <person name="Liu W."/>
            <person name="Yun D.J."/>
            <person name="Liu B."/>
            <person name="Xu Z.Y."/>
        </authorList>
    </citation>
    <scope>FUNCTION</scope>
    <scope>INTERACTION WITH HXK1</scope>
    <scope>SUBCELLULAR LOCATION</scope>
</reference>
<dbReference type="EC" id="2.1.1.-" evidence="4"/>
<dbReference type="EMBL" id="Y10580">
    <property type="protein sequence ID" value="CAA71599.1"/>
    <property type="molecule type" value="mRNA"/>
</dbReference>
<dbReference type="EMBL" id="AC003040">
    <property type="protein sequence ID" value="AAC23781.1"/>
    <property type="molecule type" value="Genomic_DNA"/>
</dbReference>
<dbReference type="EMBL" id="CP002685">
    <property type="protein sequence ID" value="AEC07449.1"/>
    <property type="molecule type" value="Genomic_DNA"/>
</dbReference>
<dbReference type="PIR" id="T01127">
    <property type="entry name" value="T01127"/>
</dbReference>
<dbReference type="RefSeq" id="NP_179919.1">
    <property type="nucleotide sequence ID" value="NM_127902.6"/>
</dbReference>
<dbReference type="SMR" id="P93831"/>
<dbReference type="BioGRID" id="2222">
    <property type="interactions" value="17"/>
</dbReference>
<dbReference type="DIP" id="DIP-31377N"/>
<dbReference type="FunCoup" id="P93831">
    <property type="interactions" value="3071"/>
</dbReference>
<dbReference type="IntAct" id="P93831">
    <property type="interactions" value="14"/>
</dbReference>
<dbReference type="STRING" id="3702.P93831"/>
<dbReference type="iPTMnet" id="P93831"/>
<dbReference type="PaxDb" id="3702-AT2G23380.1"/>
<dbReference type="ProteomicsDB" id="246546"/>
<dbReference type="EnsemblPlants" id="AT2G23380.1">
    <property type="protein sequence ID" value="AT2G23380.1"/>
    <property type="gene ID" value="AT2G23380"/>
</dbReference>
<dbReference type="GeneID" id="816870"/>
<dbReference type="Gramene" id="AT2G23380.1">
    <property type="protein sequence ID" value="AT2G23380.1"/>
    <property type="gene ID" value="AT2G23380"/>
</dbReference>
<dbReference type="KEGG" id="ath:AT2G23380"/>
<dbReference type="Araport" id="AT2G23380"/>
<dbReference type="TAIR" id="AT2G23380">
    <property type="gene designation" value="CLF"/>
</dbReference>
<dbReference type="eggNOG" id="KOG1079">
    <property type="taxonomic scope" value="Eukaryota"/>
</dbReference>
<dbReference type="HOGENOM" id="CLU_011060_0_0_1"/>
<dbReference type="InParanoid" id="P93831"/>
<dbReference type="OMA" id="RKEECVD"/>
<dbReference type="PhylomeDB" id="P93831"/>
<dbReference type="BRENDA" id="2.1.1.356">
    <property type="organism ID" value="399"/>
</dbReference>
<dbReference type="CD-CODE" id="9A8A194B">
    <property type="entry name" value="Nuclear speckle"/>
</dbReference>
<dbReference type="PRO" id="PR:P93831"/>
<dbReference type="Proteomes" id="UP000006548">
    <property type="component" value="Chromosome 2"/>
</dbReference>
<dbReference type="ExpressionAtlas" id="P93831">
    <property type="expression patterns" value="baseline and differential"/>
</dbReference>
<dbReference type="GO" id="GO:0005634">
    <property type="term" value="C:nucleus"/>
    <property type="evidence" value="ECO:0000314"/>
    <property type="project" value="UniProtKB"/>
</dbReference>
<dbReference type="GO" id="GO:0031519">
    <property type="term" value="C:PcG protein complex"/>
    <property type="evidence" value="ECO:0007669"/>
    <property type="project" value="InterPro"/>
</dbReference>
<dbReference type="GO" id="GO:0140951">
    <property type="term" value="F:histone H3K27 trimethyltransferase activity"/>
    <property type="evidence" value="ECO:0000315"/>
    <property type="project" value="UniProtKB"/>
</dbReference>
<dbReference type="GO" id="GO:0003727">
    <property type="term" value="F:single-stranded RNA binding"/>
    <property type="evidence" value="ECO:0000314"/>
    <property type="project" value="TAIR"/>
</dbReference>
<dbReference type="GO" id="GO:0009738">
    <property type="term" value="P:abscisic acid-activated signaling pathway"/>
    <property type="evidence" value="ECO:0007669"/>
    <property type="project" value="UniProtKB-KW"/>
</dbReference>
<dbReference type="GO" id="GO:1990110">
    <property type="term" value="P:callus formation"/>
    <property type="evidence" value="ECO:0000316"/>
    <property type="project" value="TAIR"/>
</dbReference>
<dbReference type="GO" id="GO:0030154">
    <property type="term" value="P:cell differentiation"/>
    <property type="evidence" value="ECO:0007669"/>
    <property type="project" value="UniProtKB-KW"/>
</dbReference>
<dbReference type="GO" id="GO:0009294">
    <property type="term" value="P:DNA-mediated transformation"/>
    <property type="evidence" value="ECO:0000315"/>
    <property type="project" value="TAIR"/>
</dbReference>
<dbReference type="GO" id="GO:0009908">
    <property type="term" value="P:flower development"/>
    <property type="evidence" value="ECO:0007669"/>
    <property type="project" value="UniProtKB-KW"/>
</dbReference>
<dbReference type="GO" id="GO:0009965">
    <property type="term" value="P:leaf morphogenesis"/>
    <property type="evidence" value="ECO:0000315"/>
    <property type="project" value="TAIR"/>
</dbReference>
<dbReference type="GO" id="GO:0032259">
    <property type="term" value="P:methylation"/>
    <property type="evidence" value="ECO:0007669"/>
    <property type="project" value="UniProtKB-KW"/>
</dbReference>
<dbReference type="GO" id="GO:0045814">
    <property type="term" value="P:negative regulation of gene expression, epigenetic"/>
    <property type="evidence" value="ECO:0000315"/>
    <property type="project" value="UniProtKB"/>
</dbReference>
<dbReference type="GO" id="GO:0006355">
    <property type="term" value="P:regulation of DNA-templated transcription"/>
    <property type="evidence" value="ECO:0000315"/>
    <property type="project" value="UniProtKB"/>
</dbReference>
<dbReference type="GO" id="GO:0009909">
    <property type="term" value="P:regulation of flower development"/>
    <property type="evidence" value="ECO:0000315"/>
    <property type="project" value="UniProtKB"/>
</dbReference>
<dbReference type="GO" id="GO:1900055">
    <property type="term" value="P:regulation of leaf senescence"/>
    <property type="evidence" value="ECO:0000316"/>
    <property type="project" value="TAIR"/>
</dbReference>
<dbReference type="GO" id="GO:0009737">
    <property type="term" value="P:response to abscisic acid"/>
    <property type="evidence" value="ECO:0000316"/>
    <property type="project" value="TAIR"/>
</dbReference>
<dbReference type="GO" id="GO:0010228">
    <property type="term" value="P:vegetative to reproductive phase transition of meristem"/>
    <property type="evidence" value="ECO:0000315"/>
    <property type="project" value="TAIR"/>
</dbReference>
<dbReference type="GO" id="GO:0010048">
    <property type="term" value="P:vernalization response"/>
    <property type="evidence" value="ECO:0000315"/>
    <property type="project" value="TAIR"/>
</dbReference>
<dbReference type="CDD" id="cd10519">
    <property type="entry name" value="SET_EZH"/>
    <property type="match status" value="1"/>
</dbReference>
<dbReference type="FunFam" id="2.170.270.10:FF:000001">
    <property type="entry name" value="Putative histone-lysine N-methyltransferase EZH2"/>
    <property type="match status" value="1"/>
</dbReference>
<dbReference type="Gene3D" id="2.170.270.10">
    <property type="entry name" value="SET domain"/>
    <property type="match status" value="1"/>
</dbReference>
<dbReference type="InterPro" id="IPR026489">
    <property type="entry name" value="CXC_dom"/>
</dbReference>
<dbReference type="InterPro" id="IPR045318">
    <property type="entry name" value="EZH1/2-like"/>
</dbReference>
<dbReference type="InterPro" id="IPR025778">
    <property type="entry name" value="Hist-Lys_N-MeTrfase_plant"/>
</dbReference>
<dbReference type="InterPro" id="IPR041355">
    <property type="entry name" value="Pre-SET_CXC"/>
</dbReference>
<dbReference type="InterPro" id="IPR001214">
    <property type="entry name" value="SET_dom"/>
</dbReference>
<dbReference type="InterPro" id="IPR046341">
    <property type="entry name" value="SET_dom_sf"/>
</dbReference>
<dbReference type="InterPro" id="IPR033467">
    <property type="entry name" value="Tesmin/TSO1-like_CXC"/>
</dbReference>
<dbReference type="PANTHER" id="PTHR45747">
    <property type="entry name" value="HISTONE-LYSINE N-METHYLTRANSFERASE E(Z)"/>
    <property type="match status" value="1"/>
</dbReference>
<dbReference type="PANTHER" id="PTHR45747:SF4">
    <property type="entry name" value="HISTONE-LYSINE N-METHYLTRANSFERASE E(Z)"/>
    <property type="match status" value="1"/>
</dbReference>
<dbReference type="Pfam" id="PF18264">
    <property type="entry name" value="preSET_CXC"/>
    <property type="match status" value="1"/>
</dbReference>
<dbReference type="Pfam" id="PF00856">
    <property type="entry name" value="SET"/>
    <property type="match status" value="1"/>
</dbReference>
<dbReference type="SMART" id="SM01114">
    <property type="entry name" value="CXC"/>
    <property type="match status" value="1"/>
</dbReference>
<dbReference type="SMART" id="SM00317">
    <property type="entry name" value="SET"/>
    <property type="match status" value="1"/>
</dbReference>
<dbReference type="SUPFAM" id="SSF82199">
    <property type="entry name" value="SET domain"/>
    <property type="match status" value="1"/>
</dbReference>
<dbReference type="PROSITE" id="PS51633">
    <property type="entry name" value="CXC"/>
    <property type="match status" value="1"/>
</dbReference>
<dbReference type="PROSITE" id="PS51576">
    <property type="entry name" value="SAM_MT43_EZ"/>
    <property type="match status" value="1"/>
</dbReference>
<dbReference type="PROSITE" id="PS50280">
    <property type="entry name" value="SET"/>
    <property type="match status" value="1"/>
</dbReference>
<accession>P93831</accession>
<accession>O80455</accession>
<proteinExistence type="evidence at protein level"/>
<gene>
    <name evidence="22 23" type="primary">CLF</name>
    <name evidence="20" type="synonym">ICU1</name>
    <name type="synonym">PIF1</name>
    <name type="synonym">PIF2</name>
    <name evidence="21" type="synonym">SDG1</name>
    <name evidence="21" type="synonym">SET1</name>
    <name evidence="25" type="ordered locus">At2g23380</name>
    <name evidence="26" type="ORF">F26B6.3</name>
</gene>
<sequence length="902" mass="100370">MASEASPSSSATRSEPPKDSPAEERGPASKEVSEVIESLKKKLAADRCISIKKRIDENKKNLFAITQSFMRSSMERGGSCKDGSDLLVKRQRDSPGMKSGIDESNNNRYVEDGPASSGMVQGSSVPVKISLRPIKMPDIKRLSPYTTWVFLDRNQRMTEDQSVVGRRRIYYDQTGGEALICSDSEEEAIDDEEEKRDFLEPEDYIIRMTLEQLGLSDSVLAELASFLSRSTSEIKARHGVLMKEKEVSESGDNQAESSLLNKDMEGALDSFDNLFCRRCLVFDCRLHGCSQDLIFPAEKPAPWCPPVDENLTCGANCYKTLLKSGRFPGYGTIEGKTGTSSDGAGTKTTPTKFSSKLNGRKPKTFPSESASSNEKCALETSDSENGLQQDTNSDKVSSSPKVKGSGRRVGRKRNKNRVAERVPRKTQKRQKKTEASDSDSIASGSCSPSDAKHKDNEDATSSSQKHVKSGNSGKSRKNGTPAEVSNNSVKDDVPVCQSNEVASELDAPGSDESLRKEEFMGETVSRGRLATNKLWRPLEKSLFDKGVEIFGMNSCLIARNLLSGFKSCWEVFQYMTCSENKASFFGGDGLNPDGSSKFDINGNMVNNQVRRRSRFLRRRGKVRRLKYTWKSAAYHSIRKRITEKKDQPCRQFNPCNCKIACGKECPCLLNGTCCEKYCGCPKSCKNRFRGCHCAKSQCRSRQCPCFAADRECDPDVCRNCWVIGGDGSLGVPSQRGDNYECRNMKLLLKQQQRVLLGISDVSGWGAFLKNSVSKHEYLGEYTGELISHKEADKRGKIYDRENCSFLFNLNDQFVLDAYRKGDKLKFANHSPEPNCYAKVIMVAGDHRVGIFAKERILAGEELFYDYRYEPDRAPAWAKKPEAPGSKKDENVTPSVGRPKKLA</sequence>
<name>CLF_ARATH</name>
<evidence type="ECO:0000250" key="1"/>
<evidence type="ECO:0000255" key="2"/>
<evidence type="ECO:0000255" key="3">
    <source>
        <dbReference type="PROSITE-ProRule" id="PRU00190"/>
    </source>
</evidence>
<evidence type="ECO:0000255" key="4">
    <source>
        <dbReference type="PROSITE-ProRule" id="PRU00909"/>
    </source>
</evidence>
<evidence type="ECO:0000255" key="5">
    <source>
        <dbReference type="PROSITE-ProRule" id="PRU00970"/>
    </source>
</evidence>
<evidence type="ECO:0000256" key="6">
    <source>
        <dbReference type="SAM" id="MobiDB-lite"/>
    </source>
</evidence>
<evidence type="ECO:0000269" key="7">
    <source>
    </source>
</evidence>
<evidence type="ECO:0000269" key="8">
    <source>
    </source>
</evidence>
<evidence type="ECO:0000269" key="9">
    <source>
    </source>
</evidence>
<evidence type="ECO:0000269" key="10">
    <source>
    </source>
</evidence>
<evidence type="ECO:0000269" key="11">
    <source>
    </source>
</evidence>
<evidence type="ECO:0000269" key="12">
    <source>
    </source>
</evidence>
<evidence type="ECO:0000269" key="13">
    <source>
    </source>
</evidence>
<evidence type="ECO:0000269" key="14">
    <source>
    </source>
</evidence>
<evidence type="ECO:0000269" key="15">
    <source>
    </source>
</evidence>
<evidence type="ECO:0000269" key="16">
    <source>
    </source>
</evidence>
<evidence type="ECO:0000269" key="17">
    <source>
    </source>
</evidence>
<evidence type="ECO:0000269" key="18">
    <source>
    </source>
</evidence>
<evidence type="ECO:0000269" key="19">
    <source>
    </source>
</evidence>
<evidence type="ECO:0000303" key="20">
    <source>
    </source>
</evidence>
<evidence type="ECO:0000303" key="21">
    <source>
    </source>
</evidence>
<evidence type="ECO:0000303" key="22">
    <source>
    </source>
</evidence>
<evidence type="ECO:0000303" key="23">
    <source>
    </source>
</evidence>
<evidence type="ECO:0000305" key="24"/>
<evidence type="ECO:0000312" key="25">
    <source>
        <dbReference type="Araport" id="AT2G23380"/>
    </source>
</evidence>
<evidence type="ECO:0000312" key="26">
    <source>
        <dbReference type="EMBL" id="AAC23781.1"/>
    </source>
</evidence>
<comment type="function">
    <text evidence="7 8 11 16 17 18 19">Polycomb group (PcG) protein. Catalytic subunit of some PcG multiprotein complex, which methylates 'Lys-27' of histone H3, leading to transcriptional repression of the affected target genes, mainly abscisic acid (ABA) responsive elements (PubMed:17881378, PubMed:30307069). Required to regulate floral development by repressing the AGAMOUS homeotic gene in leaves, inflorescence stems and flowers (PubMed:17881378). Together with ATX1, modulates AG nucleosome methylation statement (PubMed:17881378). Regulates the antero-posterior organization of the endosperm, as well as the division and elongation rates of leaf cells. PcG proteins act by forming multiprotein complexes, which are required to maintain the transcriptionally repressive state of homeotic genes throughout development. PcG proteins are not required to initiate repression, but to maintain it during later stages of development. Forms a nuclear complex with EZA1/SWN and HXK1 to target common glucose-responsive genes and regulate glucose signaling by glucose-mediated gene repression (PubMed:35394700). Affects the recruitment of HXK1 to the target chromatin (PubMed:35394700).</text>
</comment>
<comment type="catalytic activity">
    <reaction evidence="4">
        <text>L-lysyl-[histone] + S-adenosyl-L-methionine = N(6)-methyl-L-lysyl-[histone] + S-adenosyl-L-homocysteine + H(+)</text>
        <dbReference type="Rhea" id="RHEA:10024"/>
        <dbReference type="Rhea" id="RHEA-COMP:9845"/>
        <dbReference type="Rhea" id="RHEA-COMP:9846"/>
        <dbReference type="ChEBI" id="CHEBI:15378"/>
        <dbReference type="ChEBI" id="CHEBI:29969"/>
        <dbReference type="ChEBI" id="CHEBI:57856"/>
        <dbReference type="ChEBI" id="CHEBI:59789"/>
        <dbReference type="ChEBI" id="CHEBI:61929"/>
    </reaction>
</comment>
<comment type="subunit">
    <text evidence="1 10 11 12 13 14 15 17">Probable component of a PcG complex. In plants, PcG complexes are probably composed of a member of the EZ family (CLF or MEA), FIE, and a member of the VEFS family (FIS2, VRN2 or EMF2) (By similarity). Interacts with FIE (PubMed:14871310). Interacts with RING1A (PubMed:19097900). Binds to ALP1 (PubMed:26642436). Interacts with BLI (PubMed:20647345). Binds to ATX1 in the nucleus (PubMed:17881378). Interacts with EOL1 (PubMed:28428341). Interacts (via SANT domain) with HXK1 in the nucleus (PubMed:35394700).</text>
</comment>
<comment type="interaction">
    <interactant intactId="EBI-307155">
        <id>P93831</id>
    </interactant>
    <interactant intactId="EBI-15923123">
        <id>Q9SHY1</id>
        <label>At1g65740</label>
    </interactant>
    <organismsDiffer>false</organismsDiffer>
    <experiments>2</experiments>
</comment>
<comment type="interaction">
    <interactant intactId="EBI-307155">
        <id>P93831</id>
    </interactant>
    <interactant intactId="EBI-2128696">
        <id>Q8L6Y4</id>
        <label>EMF2</label>
    </interactant>
    <organismsDiffer>false</organismsDiffer>
    <experiments>4</experiments>
</comment>
<comment type="interaction">
    <interactant intactId="EBI-307155">
        <id>P93831</id>
    </interactant>
    <interactant intactId="EBI-307146">
        <id>Q9LT47</id>
        <label>FIE</label>
    </interactant>
    <organismsDiffer>false</organismsDiffer>
    <experiments>4</experiments>
</comment>
<comment type="interaction">
    <interactant intactId="EBI-307155">
        <id>P93831</id>
    </interactant>
    <interactant intactId="EBI-9661079">
        <id>O22607</id>
        <label>MSI4</label>
    </interactant>
    <organismsDiffer>false</organismsDiffer>
    <experiments>3</experiments>
</comment>
<comment type="interaction">
    <interactant intactId="EBI-307155">
        <id>P93831</id>
    </interactant>
    <interactant intactId="EBI-2128880">
        <id>Q8W5B1</id>
        <label>VRN2</label>
    </interactant>
    <organismsDiffer>false</organismsDiffer>
    <experiments>3</experiments>
</comment>
<comment type="subcellular location">
    <subcellularLocation>
        <location evidence="9 11 17">Nucleus</location>
    </subcellularLocation>
</comment>
<comment type="tissue specificity">
    <text evidence="18">Strongly expressed throughout the apical meristem, leaf primordia, and leaves of 7-8 day-old seedling. Weakly expressed in the vasculature of hypocotyl. Strongly expressed throughout the young stages 1 and 2 floral meristems that arose on the flanks of the apex. In stage 3 and 4 flowers, it is expressed in the emerging sepal primordia and in the dome of the floral meristem. During stages 6 and 7, it is strongly expressed in developing petal and stamen, and weakly expressed in the sepals. Late in floral development, at stage 12, it is weakly expressed in all floral whorls, and expressed at intermediate level in petals and ovules.</text>
</comment>
<comment type="developmental stage">
    <text>Expressed in all four whorls throughout flower development.</text>
</comment>
<comment type="disruption phenotype">
    <text evidence="11 16">Misexpression of AGAMOUS, recognizable phenotypes (e.g. curly leaves, and early flowering time) and loss of H3K27me3 histone H3-tail marks (PubMed:17881378). Double mutant plants atx1 clf exhibits normal leaf-phenotype and flowering time (PubMed:17881378). The double mutant clf-50 swn-1 is hypersensitive to abscisic acid (ABA) associated with reduced ABA-responsive genes repression by histone H3 'Lys-27' methylation (H3K27me3) (PubMed:30307069).</text>
</comment>
<comment type="similarity">
    <text evidence="4">Belongs to the class V-like SAM-binding methyltransferase superfamily. Histone-lysine methyltransferase family. EZ subfamily.</text>
</comment>
<protein>
    <recommendedName>
        <fullName evidence="22 23">Histone-lysine N-methyltransferase CLF</fullName>
        <ecNumber evidence="4">2.1.1.-</ecNumber>
    </recommendedName>
    <alternativeName>
        <fullName evidence="22 23">Polycomb group protein CURLY LEAF</fullName>
    </alternativeName>
    <alternativeName>
        <fullName evidence="20">Protein INCURVATA 1</fullName>
    </alternativeName>
    <alternativeName>
        <fullName evidence="21">Protein SET DOMAIN GROUP 1</fullName>
    </alternativeName>
    <alternativeName>
        <fullName>Protein photoperiod insensitive flowering</fullName>
    </alternativeName>
</protein>